<dbReference type="EMBL" id="AE014296">
    <property type="protein sequence ID" value="AAF50371.2"/>
    <property type="molecule type" value="Genomic_DNA"/>
</dbReference>
<dbReference type="EMBL" id="AY051521">
    <property type="protein sequence ID" value="AAK92945.1"/>
    <property type="status" value="ALT_SEQ"/>
    <property type="molecule type" value="mRNA"/>
</dbReference>
<dbReference type="EMBL" id="X62591">
    <property type="protein sequence ID" value="CAA44476.1"/>
    <property type="status" value="ALT_FRAME"/>
    <property type="molecule type" value="mRNA"/>
</dbReference>
<dbReference type="PIR" id="S22027">
    <property type="entry name" value="S22027"/>
</dbReference>
<dbReference type="RefSeq" id="NP_729406.1">
    <molecule id="P35416-1"/>
    <property type="nucleotide sequence ID" value="NM_168291.1"/>
</dbReference>
<dbReference type="RefSeq" id="NP_729407.1">
    <molecule id="P35416-1"/>
    <property type="nucleotide sequence ID" value="NM_168292.2"/>
</dbReference>
<dbReference type="SMR" id="P35416"/>
<dbReference type="BioGRID" id="64408">
    <property type="interactions" value="60"/>
</dbReference>
<dbReference type="IntAct" id="P35416">
    <property type="interactions" value="91"/>
</dbReference>
<dbReference type="DNASU" id="39002"/>
<dbReference type="EnsemblMetazoa" id="FBtr0076595">
    <molecule id="P35416-1"/>
    <property type="protein sequence ID" value="FBpp0076322"/>
    <property type="gene ID" value="FBgn0003149"/>
</dbReference>
<dbReference type="EnsemblMetazoa" id="FBtr0076596">
    <molecule id="P35416-1"/>
    <property type="protein sequence ID" value="FBpp0076323"/>
    <property type="gene ID" value="FBgn0003149"/>
</dbReference>
<dbReference type="GeneID" id="39002"/>
<dbReference type="AGR" id="FB:FBgn0003149"/>
<dbReference type="CTD" id="39002"/>
<dbReference type="FlyBase" id="FBgn0003149">
    <property type="gene designation" value="Prm"/>
</dbReference>
<dbReference type="VEuPathDB" id="VectorBase:FBgn0003149"/>
<dbReference type="GeneTree" id="ENSGT00940000173651"/>
<dbReference type="HOGENOM" id="CLU_027023_0_0_1"/>
<dbReference type="OrthoDB" id="2018427at2759"/>
<dbReference type="BioGRID-ORCS" id="39002">
    <property type="hits" value="0 hits in 3 CRISPR screens"/>
</dbReference>
<dbReference type="ChiTaRS" id="Prm">
    <property type="organism name" value="fly"/>
</dbReference>
<dbReference type="GenomeRNAi" id="39002"/>
<dbReference type="Proteomes" id="UP000000803">
    <property type="component" value="Chromosome 3L"/>
</dbReference>
<dbReference type="Bgee" id="FBgn0003149">
    <property type="expression patterns" value="Expressed in oviduct (Drosophila) and 99 other cell types or tissues"/>
</dbReference>
<dbReference type="ExpressionAtlas" id="P35416">
    <property type="expression patterns" value="baseline and differential"/>
</dbReference>
<dbReference type="GO" id="GO:0005737">
    <property type="term" value="C:cytoplasm"/>
    <property type="evidence" value="ECO:0000318"/>
    <property type="project" value="GO_Central"/>
</dbReference>
<dbReference type="GO" id="GO:0005856">
    <property type="term" value="C:cytoskeleton"/>
    <property type="evidence" value="ECO:0000318"/>
    <property type="project" value="GO_Central"/>
</dbReference>
<dbReference type="GO" id="GO:0016459">
    <property type="term" value="C:myosin complex"/>
    <property type="evidence" value="ECO:0007669"/>
    <property type="project" value="UniProtKB-KW"/>
</dbReference>
<dbReference type="GO" id="GO:0005863">
    <property type="term" value="C:striated muscle myosin thick filament"/>
    <property type="evidence" value="ECO:0007005"/>
    <property type="project" value="FlyBase"/>
</dbReference>
<dbReference type="GO" id="GO:0072518">
    <property type="term" value="F:Rho-dependent protein serine/threonine kinase activity"/>
    <property type="evidence" value="ECO:0000318"/>
    <property type="project" value="GO_Central"/>
</dbReference>
<dbReference type="GO" id="GO:0031032">
    <property type="term" value="P:actomyosin structure organization"/>
    <property type="evidence" value="ECO:0000318"/>
    <property type="project" value="GO_Central"/>
</dbReference>
<dbReference type="GO" id="GO:0030866">
    <property type="term" value="P:cortical actin cytoskeleton organization"/>
    <property type="evidence" value="ECO:0000318"/>
    <property type="project" value="GO_Central"/>
</dbReference>
<dbReference type="GO" id="GO:0048598">
    <property type="term" value="P:embryonic morphogenesis"/>
    <property type="evidence" value="ECO:0000318"/>
    <property type="project" value="GO_Central"/>
</dbReference>
<dbReference type="GO" id="GO:0007498">
    <property type="term" value="P:mesoderm development"/>
    <property type="evidence" value="ECO:0000270"/>
    <property type="project" value="FlyBase"/>
</dbReference>
<dbReference type="GO" id="GO:0000281">
    <property type="term" value="P:mitotic cytokinesis"/>
    <property type="evidence" value="ECO:0000318"/>
    <property type="project" value="GO_Central"/>
</dbReference>
<dbReference type="GO" id="GO:0030239">
    <property type="term" value="P:myofibril assembly"/>
    <property type="evidence" value="ECO:0000315"/>
    <property type="project" value="FlyBase"/>
</dbReference>
<dbReference type="GO" id="GO:0032956">
    <property type="term" value="P:regulation of actin cytoskeleton organization"/>
    <property type="evidence" value="ECO:0000318"/>
    <property type="project" value="GO_Central"/>
</dbReference>
<dbReference type="GO" id="GO:1901888">
    <property type="term" value="P:regulation of cell junction assembly"/>
    <property type="evidence" value="ECO:0000318"/>
    <property type="project" value="GO_Central"/>
</dbReference>
<dbReference type="GO" id="GO:0007266">
    <property type="term" value="P:Rho protein signal transduction"/>
    <property type="evidence" value="ECO:0000318"/>
    <property type="project" value="GO_Central"/>
</dbReference>
<dbReference type="Gene3D" id="1.20.5.370">
    <property type="match status" value="1"/>
</dbReference>
<dbReference type="InterPro" id="IPR002928">
    <property type="entry name" value="Myosin_tail"/>
</dbReference>
<dbReference type="InterPro" id="IPR014751">
    <property type="entry name" value="XRCC4-like_C"/>
</dbReference>
<dbReference type="PANTHER" id="PTHR46349">
    <property type="entry name" value="CINGULIN-LIKE PROTEIN 1-RELATED"/>
    <property type="match status" value="1"/>
</dbReference>
<dbReference type="PANTHER" id="PTHR46349:SF7">
    <property type="entry name" value="MYOSIN TAIL DOMAIN-CONTAINING PROTEIN"/>
    <property type="match status" value="1"/>
</dbReference>
<dbReference type="Pfam" id="PF01576">
    <property type="entry name" value="Myosin_tail_1"/>
    <property type="match status" value="1"/>
</dbReference>
<dbReference type="SUPFAM" id="SSF90257">
    <property type="entry name" value="Myosin rod fragments"/>
    <property type="match status" value="3"/>
</dbReference>
<reference key="1">
    <citation type="journal article" date="2000" name="Science">
        <title>The genome sequence of Drosophila melanogaster.</title>
        <authorList>
            <person name="Adams M.D."/>
            <person name="Celniker S.E."/>
            <person name="Holt R.A."/>
            <person name="Evans C.A."/>
            <person name="Gocayne J.D."/>
            <person name="Amanatides P.G."/>
            <person name="Scherer S.E."/>
            <person name="Li P.W."/>
            <person name="Hoskins R.A."/>
            <person name="Galle R.F."/>
            <person name="George R.A."/>
            <person name="Lewis S.E."/>
            <person name="Richards S."/>
            <person name="Ashburner M."/>
            <person name="Henderson S.N."/>
            <person name="Sutton G.G."/>
            <person name="Wortman J.R."/>
            <person name="Yandell M.D."/>
            <person name="Zhang Q."/>
            <person name="Chen L.X."/>
            <person name="Brandon R.C."/>
            <person name="Rogers Y.-H.C."/>
            <person name="Blazej R.G."/>
            <person name="Champe M."/>
            <person name="Pfeiffer B.D."/>
            <person name="Wan K.H."/>
            <person name="Doyle C."/>
            <person name="Baxter E.G."/>
            <person name="Helt G."/>
            <person name="Nelson C.R."/>
            <person name="Miklos G.L.G."/>
            <person name="Abril J.F."/>
            <person name="Agbayani A."/>
            <person name="An H.-J."/>
            <person name="Andrews-Pfannkoch C."/>
            <person name="Baldwin D."/>
            <person name="Ballew R.M."/>
            <person name="Basu A."/>
            <person name="Baxendale J."/>
            <person name="Bayraktaroglu L."/>
            <person name="Beasley E.M."/>
            <person name="Beeson K.Y."/>
            <person name="Benos P.V."/>
            <person name="Berman B.P."/>
            <person name="Bhandari D."/>
            <person name="Bolshakov S."/>
            <person name="Borkova D."/>
            <person name="Botchan M.R."/>
            <person name="Bouck J."/>
            <person name="Brokstein P."/>
            <person name="Brottier P."/>
            <person name="Burtis K.C."/>
            <person name="Busam D.A."/>
            <person name="Butler H."/>
            <person name="Cadieu E."/>
            <person name="Center A."/>
            <person name="Chandra I."/>
            <person name="Cherry J.M."/>
            <person name="Cawley S."/>
            <person name="Dahlke C."/>
            <person name="Davenport L.B."/>
            <person name="Davies P."/>
            <person name="de Pablos B."/>
            <person name="Delcher A."/>
            <person name="Deng Z."/>
            <person name="Mays A.D."/>
            <person name="Dew I."/>
            <person name="Dietz S.M."/>
            <person name="Dodson K."/>
            <person name="Doup L.E."/>
            <person name="Downes M."/>
            <person name="Dugan-Rocha S."/>
            <person name="Dunkov B.C."/>
            <person name="Dunn P."/>
            <person name="Durbin K.J."/>
            <person name="Evangelista C.C."/>
            <person name="Ferraz C."/>
            <person name="Ferriera S."/>
            <person name="Fleischmann W."/>
            <person name="Fosler C."/>
            <person name="Gabrielian A.E."/>
            <person name="Garg N.S."/>
            <person name="Gelbart W.M."/>
            <person name="Glasser K."/>
            <person name="Glodek A."/>
            <person name="Gong F."/>
            <person name="Gorrell J.H."/>
            <person name="Gu Z."/>
            <person name="Guan P."/>
            <person name="Harris M."/>
            <person name="Harris N.L."/>
            <person name="Harvey D.A."/>
            <person name="Heiman T.J."/>
            <person name="Hernandez J.R."/>
            <person name="Houck J."/>
            <person name="Hostin D."/>
            <person name="Houston K.A."/>
            <person name="Howland T.J."/>
            <person name="Wei M.-H."/>
            <person name="Ibegwam C."/>
            <person name="Jalali M."/>
            <person name="Kalush F."/>
            <person name="Karpen G.H."/>
            <person name="Ke Z."/>
            <person name="Kennison J.A."/>
            <person name="Ketchum K.A."/>
            <person name="Kimmel B.E."/>
            <person name="Kodira C.D."/>
            <person name="Kraft C.L."/>
            <person name="Kravitz S."/>
            <person name="Kulp D."/>
            <person name="Lai Z."/>
            <person name="Lasko P."/>
            <person name="Lei Y."/>
            <person name="Levitsky A.A."/>
            <person name="Li J.H."/>
            <person name="Li Z."/>
            <person name="Liang Y."/>
            <person name="Lin X."/>
            <person name="Liu X."/>
            <person name="Mattei B."/>
            <person name="McIntosh T.C."/>
            <person name="McLeod M.P."/>
            <person name="McPherson D."/>
            <person name="Merkulov G."/>
            <person name="Milshina N.V."/>
            <person name="Mobarry C."/>
            <person name="Morris J."/>
            <person name="Moshrefi A."/>
            <person name="Mount S.M."/>
            <person name="Moy M."/>
            <person name="Murphy B."/>
            <person name="Murphy L."/>
            <person name="Muzny D.M."/>
            <person name="Nelson D.L."/>
            <person name="Nelson D.R."/>
            <person name="Nelson K.A."/>
            <person name="Nixon K."/>
            <person name="Nusskern D.R."/>
            <person name="Pacleb J.M."/>
            <person name="Palazzolo M."/>
            <person name="Pittman G.S."/>
            <person name="Pan S."/>
            <person name="Pollard J."/>
            <person name="Puri V."/>
            <person name="Reese M.G."/>
            <person name="Reinert K."/>
            <person name="Remington K."/>
            <person name="Saunders R.D.C."/>
            <person name="Scheeler F."/>
            <person name="Shen H."/>
            <person name="Shue B.C."/>
            <person name="Siden-Kiamos I."/>
            <person name="Simpson M."/>
            <person name="Skupski M.P."/>
            <person name="Smith T.J."/>
            <person name="Spier E."/>
            <person name="Spradling A.C."/>
            <person name="Stapleton M."/>
            <person name="Strong R."/>
            <person name="Sun E."/>
            <person name="Svirskas R."/>
            <person name="Tector C."/>
            <person name="Turner R."/>
            <person name="Venter E."/>
            <person name="Wang A.H."/>
            <person name="Wang X."/>
            <person name="Wang Z.-Y."/>
            <person name="Wassarman D.A."/>
            <person name="Weinstock G.M."/>
            <person name="Weissenbach J."/>
            <person name="Williams S.M."/>
            <person name="Woodage T."/>
            <person name="Worley K.C."/>
            <person name="Wu D."/>
            <person name="Yang S."/>
            <person name="Yao Q.A."/>
            <person name="Ye J."/>
            <person name="Yeh R.-F."/>
            <person name="Zaveri J.S."/>
            <person name="Zhan M."/>
            <person name="Zhang G."/>
            <person name="Zhao Q."/>
            <person name="Zheng L."/>
            <person name="Zheng X.H."/>
            <person name="Zhong F.N."/>
            <person name="Zhong W."/>
            <person name="Zhou X."/>
            <person name="Zhu S.C."/>
            <person name="Zhu X."/>
            <person name="Smith H.O."/>
            <person name="Gibbs R.A."/>
            <person name="Myers E.W."/>
            <person name="Rubin G.M."/>
            <person name="Venter J.C."/>
        </authorList>
    </citation>
    <scope>NUCLEOTIDE SEQUENCE [LARGE SCALE GENOMIC DNA]</scope>
    <source>
        <strain>Berkeley</strain>
    </source>
</reference>
<reference key="2">
    <citation type="journal article" date="2002" name="Genome Biol.">
        <title>Annotation of the Drosophila melanogaster euchromatic genome: a systematic review.</title>
        <authorList>
            <person name="Misra S."/>
            <person name="Crosby M.A."/>
            <person name="Mungall C.J."/>
            <person name="Matthews B.B."/>
            <person name="Campbell K.S."/>
            <person name="Hradecky P."/>
            <person name="Huang Y."/>
            <person name="Kaminker J.S."/>
            <person name="Millburn G.H."/>
            <person name="Prochnik S.E."/>
            <person name="Smith C.D."/>
            <person name="Tupy J.L."/>
            <person name="Whitfield E.J."/>
            <person name="Bayraktaroglu L."/>
            <person name="Berman B.P."/>
            <person name="Bettencourt B.R."/>
            <person name="Celniker S.E."/>
            <person name="de Grey A.D.N.J."/>
            <person name="Drysdale R.A."/>
            <person name="Harris N.L."/>
            <person name="Richter J."/>
            <person name="Russo S."/>
            <person name="Schroeder A.J."/>
            <person name="Shu S.Q."/>
            <person name="Stapleton M."/>
            <person name="Yamada C."/>
            <person name="Ashburner M."/>
            <person name="Gelbart W.M."/>
            <person name="Rubin G.M."/>
            <person name="Lewis S.E."/>
        </authorList>
    </citation>
    <scope>GENOME REANNOTATION</scope>
    <source>
        <strain>Berkeley</strain>
    </source>
</reference>
<reference key="3">
    <citation type="journal article" date="2002" name="Genome Biol.">
        <title>A Drosophila full-length cDNA resource.</title>
        <authorList>
            <person name="Stapleton M."/>
            <person name="Carlson J.W."/>
            <person name="Brokstein P."/>
            <person name="Yu C."/>
            <person name="Champe M."/>
            <person name="George R.A."/>
            <person name="Guarin H."/>
            <person name="Kronmiller B."/>
            <person name="Pacleb J.M."/>
            <person name="Park S."/>
            <person name="Wan K.H."/>
            <person name="Rubin G.M."/>
            <person name="Celniker S.E."/>
        </authorList>
    </citation>
    <scope>NUCLEOTIDE SEQUENCE [LARGE SCALE MRNA] OF 1-276</scope>
    <source>
        <strain>Berkeley</strain>
        <tissue>Head</tissue>
    </source>
</reference>
<reference key="4">
    <citation type="journal article" date="1992" name="J. Cell Biol.">
        <title>Analysis of Drosophila paramyosin: identification of a novel isoform which is restricted to a subset of adult muscles.</title>
        <authorList>
            <person name="Becker K.D."/>
            <person name="O'Donnell P.T."/>
            <person name="Heitz J.M."/>
            <person name="Vito M."/>
            <person name="Bernstein S.I."/>
        </authorList>
    </citation>
    <scope>NUCLEOTIDE SEQUENCE [MRNA] OF 118-640</scope>
    <source>
        <strain>Canton-S</strain>
        <tissue>Muscle</tissue>
    </source>
</reference>
<accession>P35416</accession>
<accession>Q961L6</accession>
<accession>Q9VSP5</accession>
<keyword id="KW-0025">Alternative splicing</keyword>
<keyword id="KW-0175">Coiled coil</keyword>
<keyword id="KW-0963">Cytoplasm</keyword>
<keyword id="KW-0505">Motor protein</keyword>
<keyword id="KW-0514">Muscle protein</keyword>
<keyword id="KW-0518">Myosin</keyword>
<keyword id="KW-0597">Phosphoprotein</keyword>
<keyword id="KW-1185">Reference proteome</keyword>
<keyword id="KW-0787">Thick filament</keyword>
<name>MYSP2_DROME</name>
<sequence length="640" mass="74277">MALALKQRPSRFRPTTTTYEDNYGYTMNFYQPMLDYLDAKAKGLEVKKPHLPWVSERGLKQYRPSNAVRQYNADEIVRLSRTCAARADEILLNFRAQKRSPFSVQKLVDASRVTKHLEPDTVVERSRQRRRRRQEELEDLIKRDTLKILQRIRKIELDNELDKMSDDFKRSIRGKSASAIAQALLSESEKNIKTAKKEEEDYIAQTLVRSSRAVSRARSRSSSPLDGQYRAHALHIELMDDRLVDKLDHRVSSSLHNVKRQLSTLNQRTVEFYADSSKQTSIEIEQLNARVIEAETRLKTEVTRIKKKLQIQITELEMSLDVANKTNIDLQKVIKKQSLQLTELQAHYEDVQRQLQATLDQYAVAQRRLAGLNGELEEVRSHLDSANRAKRTVELQYEEAASRINELTTANVSLVSIKSKLEQELSVVASDYEEVSKELRISDERYQKVQVELKHVVEQVHEEQERIVKLETIKKSLEVEVKNLSIRLEEVELNAVAGSKRIISKLEARIRDLELELEEEKRRHAETIKILRKKERTVKEVLVQCEEDQKNLILLQDALDKSTAKINIYRRQLSEQEGVSQQTTTRVRRFQRELEAAEDRADTAESSLNIIRAKHRTFVTTSTVPGSQVYIQETTRTITE</sequence>
<comment type="function">
    <text>Paramyosin is a major structural component of many thick filaments isolated from invertebrate muscles.</text>
</comment>
<comment type="subcellular location">
    <subcellularLocation>
        <location>Cytoplasm</location>
        <location>Myofibril</location>
    </subcellularLocation>
    <text>Thick filaments of the myofibrils.</text>
</comment>
<comment type="alternative products">
    <event type="alternative splicing"/>
    <isoform>
        <id>P35416-1</id>
        <name>Short</name>
        <name>C</name>
        <name>D</name>
        <sequence type="displayed"/>
    </isoform>
    <isoform>
        <id>P35415-1</id>
        <name>Long</name>
        <name>A</name>
        <name>B</name>
        <sequence type="external"/>
    </isoform>
    <text>Additional isoforms seem to exist. Isoforms can also be produced by post-translational modifications.</text>
</comment>
<comment type="tissue specificity">
    <text>Found in all adult muscle tissues except in indirect flight muscles and a set of temporary abdominal muscles. Not detected in larval muscle.</text>
</comment>
<comment type="PTM">
    <text>Phosphorylated.</text>
</comment>
<comment type="similarity">
    <text evidence="2">Belongs to the paramyosin family.</text>
</comment>
<comment type="sequence caution" evidence="2">
    <conflict type="frameshift">
        <sequence resource="EMBL-CDS" id="CAA44476"/>
    </conflict>
</comment>
<feature type="chain" id="PRO_0000211250" description="Paramyosin, short form">
    <location>
        <begin position="1"/>
        <end position="640"/>
    </location>
</feature>
<feature type="region of interest" description="Nonhelical region" evidence="1">
    <location>
        <begin position="1"/>
        <end position="122"/>
    </location>
</feature>
<feature type="region of interest" description="Nonhelical region" evidence="1">
    <location>
        <begin position="420"/>
        <end position="640"/>
    </location>
</feature>
<feature type="coiled-coil region" evidence="1">
    <location>
        <begin position="123"/>
        <end position="619"/>
    </location>
</feature>
<feature type="sequence conflict" description="In Ref. 4." evidence="2" ref="4">
    <original>E</original>
    <variation>Q</variation>
    <location>
        <position position="118"/>
    </location>
</feature>
<protein>
    <recommendedName>
        <fullName>Paramyosin, short form</fullName>
    </recommendedName>
    <alternativeName>
        <fullName>Miniparamyosin</fullName>
    </alternativeName>
</protein>
<proteinExistence type="evidence at transcript level"/>
<gene>
    <name type="primary">Prm</name>
    <name type="ORF">CG5939</name>
</gene>
<evidence type="ECO:0000255" key="1"/>
<evidence type="ECO:0000305" key="2"/>
<organism>
    <name type="scientific">Drosophila melanogaster</name>
    <name type="common">Fruit fly</name>
    <dbReference type="NCBI Taxonomy" id="7227"/>
    <lineage>
        <taxon>Eukaryota</taxon>
        <taxon>Metazoa</taxon>
        <taxon>Ecdysozoa</taxon>
        <taxon>Arthropoda</taxon>
        <taxon>Hexapoda</taxon>
        <taxon>Insecta</taxon>
        <taxon>Pterygota</taxon>
        <taxon>Neoptera</taxon>
        <taxon>Endopterygota</taxon>
        <taxon>Diptera</taxon>
        <taxon>Brachycera</taxon>
        <taxon>Muscomorpha</taxon>
        <taxon>Ephydroidea</taxon>
        <taxon>Drosophilidae</taxon>
        <taxon>Drosophila</taxon>
        <taxon>Sophophora</taxon>
    </lineage>
</organism>